<organism>
    <name type="scientific">Bacillus subtilis (strain 168)</name>
    <dbReference type="NCBI Taxonomy" id="224308"/>
    <lineage>
        <taxon>Bacteria</taxon>
        <taxon>Bacillati</taxon>
        <taxon>Bacillota</taxon>
        <taxon>Bacilli</taxon>
        <taxon>Bacillales</taxon>
        <taxon>Bacillaceae</taxon>
        <taxon>Bacillus</taxon>
    </lineage>
</organism>
<keyword id="KW-0002">3D-structure</keyword>
<keyword id="KW-0269">Exonuclease</keyword>
<keyword id="KW-0378">Hydrolase</keyword>
<keyword id="KW-0540">Nuclease</keyword>
<keyword id="KW-1185">Reference proteome</keyword>
<feature type="chain" id="PRO_0000360826" description="Bifunctional oligoribonuclease and PAP phosphatase NrnA">
    <location>
        <begin position="1"/>
        <end position="313"/>
    </location>
</feature>
<feature type="helix" evidence="6">
    <location>
        <begin position="1"/>
        <end position="11"/>
    </location>
</feature>
<feature type="strand" evidence="6">
    <location>
        <begin position="13"/>
        <end position="18"/>
    </location>
</feature>
<feature type="strand" evidence="6">
    <location>
        <begin position="20"/>
        <end position="22"/>
    </location>
</feature>
<feature type="helix" evidence="6">
    <location>
        <begin position="25"/>
        <end position="41"/>
    </location>
</feature>
<feature type="strand" evidence="6">
    <location>
        <begin position="45"/>
        <end position="49"/>
    </location>
</feature>
<feature type="turn" evidence="6">
    <location>
        <begin position="55"/>
        <end position="60"/>
    </location>
</feature>
<feature type="helix" evidence="6">
    <location>
        <begin position="68"/>
        <end position="71"/>
    </location>
</feature>
<feature type="strand" evidence="6">
    <location>
        <begin position="75"/>
        <end position="80"/>
    </location>
</feature>
<feature type="helix" evidence="6">
    <location>
        <begin position="84"/>
        <end position="86"/>
    </location>
</feature>
<feature type="strand" evidence="6">
    <location>
        <begin position="87"/>
        <end position="89"/>
    </location>
</feature>
<feature type="helix" evidence="6">
    <location>
        <begin position="92"/>
        <end position="94"/>
    </location>
</feature>
<feature type="strand" evidence="6">
    <location>
        <begin position="95"/>
        <end position="104"/>
    </location>
</feature>
<feature type="strand" evidence="6">
    <location>
        <begin position="111"/>
        <end position="116"/>
    </location>
</feature>
<feature type="helix" evidence="6">
    <location>
        <begin position="123"/>
        <end position="134"/>
    </location>
</feature>
<feature type="helix" evidence="6">
    <location>
        <begin position="135"/>
        <end position="137"/>
    </location>
</feature>
<feature type="helix" evidence="6">
    <location>
        <begin position="143"/>
        <end position="156"/>
    </location>
</feature>
<feature type="turn" evidence="6">
    <location>
        <begin position="157"/>
        <end position="161"/>
    </location>
</feature>
<feature type="helix" evidence="6">
    <location>
        <begin position="167"/>
        <end position="177"/>
    </location>
</feature>
<feature type="strand" evidence="6">
    <location>
        <begin position="179"/>
        <end position="181"/>
    </location>
</feature>
<feature type="helix" evidence="6">
    <location>
        <begin position="183"/>
        <end position="191"/>
    </location>
</feature>
<feature type="helix" evidence="6">
    <location>
        <begin position="195"/>
        <end position="207"/>
    </location>
</feature>
<feature type="strand" evidence="6">
    <location>
        <begin position="214"/>
        <end position="220"/>
    </location>
</feature>
<feature type="helix" evidence="6">
    <location>
        <begin position="222"/>
        <end position="228"/>
    </location>
</feature>
<feature type="helix" evidence="6">
    <location>
        <begin position="232"/>
        <end position="237"/>
    </location>
</feature>
<feature type="helix" evidence="6">
    <location>
        <begin position="238"/>
        <end position="242"/>
    </location>
</feature>
<feature type="strand" evidence="6">
    <location>
        <begin position="250"/>
        <end position="256"/>
    </location>
</feature>
<feature type="strand" evidence="6">
    <location>
        <begin position="261"/>
        <end position="270"/>
    </location>
</feature>
<feature type="helix" evidence="6">
    <location>
        <begin position="273"/>
        <end position="278"/>
    </location>
</feature>
<feature type="strand" evidence="6">
    <location>
        <begin position="282"/>
        <end position="284"/>
    </location>
</feature>
<feature type="strand" evidence="6">
    <location>
        <begin position="287"/>
        <end position="293"/>
    </location>
</feature>
<feature type="helix" evidence="6">
    <location>
        <begin position="295"/>
        <end position="309"/>
    </location>
</feature>
<gene>
    <name type="primary">nrnA</name>
    <name type="synonym">ytqI</name>
    <name type="ordered locus">BSU29250</name>
</gene>
<name>NRNA_BACSU</name>
<sequence>MKTELIRTISLYDTIILHRHVRPDPDAYGSQCGLTEILRETYPEKNIFAVGTPEPSLSFLYSLDEVDNETYEGALVIVCDTANQERIDDQRYPSGAKLMKIDHHPNEDPYGDLLWVDTSASSVSEMIYELYLEGKEHGWKLNTKAAELIYAGIVGDTGRFLFPNTTEKTLKYAGELIQYPFSSSELFNQLYETKLNVVKLNGFIFQNVSLSENGAASVFIKKDTLEKFGTTASEASQLVGTLGNISGIRAWVFFVEEDDQIRVRFRSKGPVINGLARKYNGGGHPLASGASIYSWDEADRILADLETLCKEHE</sequence>
<reference key="1">
    <citation type="journal article" date="1997" name="Microbiology">
        <title>Sequencing and functional annotation of the Bacillus subtilis genes in the 200 kb rrnB-dnaB region.</title>
        <authorList>
            <person name="Lapidus A."/>
            <person name="Galleron N."/>
            <person name="Sorokin A."/>
            <person name="Ehrlich S.D."/>
        </authorList>
    </citation>
    <scope>NUCLEOTIDE SEQUENCE [GENOMIC DNA]</scope>
    <source>
        <strain>168</strain>
    </source>
</reference>
<reference key="2">
    <citation type="journal article" date="1997" name="Nature">
        <title>The complete genome sequence of the Gram-positive bacterium Bacillus subtilis.</title>
        <authorList>
            <person name="Kunst F."/>
            <person name="Ogasawara N."/>
            <person name="Moszer I."/>
            <person name="Albertini A.M."/>
            <person name="Alloni G."/>
            <person name="Azevedo V."/>
            <person name="Bertero M.G."/>
            <person name="Bessieres P."/>
            <person name="Bolotin A."/>
            <person name="Borchert S."/>
            <person name="Borriss R."/>
            <person name="Boursier L."/>
            <person name="Brans A."/>
            <person name="Braun M."/>
            <person name="Brignell S.C."/>
            <person name="Bron S."/>
            <person name="Brouillet S."/>
            <person name="Bruschi C.V."/>
            <person name="Caldwell B."/>
            <person name="Capuano V."/>
            <person name="Carter N.M."/>
            <person name="Choi S.-K."/>
            <person name="Codani J.-J."/>
            <person name="Connerton I.F."/>
            <person name="Cummings N.J."/>
            <person name="Daniel R.A."/>
            <person name="Denizot F."/>
            <person name="Devine K.M."/>
            <person name="Duesterhoeft A."/>
            <person name="Ehrlich S.D."/>
            <person name="Emmerson P.T."/>
            <person name="Entian K.-D."/>
            <person name="Errington J."/>
            <person name="Fabret C."/>
            <person name="Ferrari E."/>
            <person name="Foulger D."/>
            <person name="Fritz C."/>
            <person name="Fujita M."/>
            <person name="Fujita Y."/>
            <person name="Fuma S."/>
            <person name="Galizzi A."/>
            <person name="Galleron N."/>
            <person name="Ghim S.-Y."/>
            <person name="Glaser P."/>
            <person name="Goffeau A."/>
            <person name="Golightly E.J."/>
            <person name="Grandi G."/>
            <person name="Guiseppi G."/>
            <person name="Guy B.J."/>
            <person name="Haga K."/>
            <person name="Haiech J."/>
            <person name="Harwood C.R."/>
            <person name="Henaut A."/>
            <person name="Hilbert H."/>
            <person name="Holsappel S."/>
            <person name="Hosono S."/>
            <person name="Hullo M.-F."/>
            <person name="Itaya M."/>
            <person name="Jones L.-M."/>
            <person name="Joris B."/>
            <person name="Karamata D."/>
            <person name="Kasahara Y."/>
            <person name="Klaerr-Blanchard M."/>
            <person name="Klein C."/>
            <person name="Kobayashi Y."/>
            <person name="Koetter P."/>
            <person name="Koningstein G."/>
            <person name="Krogh S."/>
            <person name="Kumano M."/>
            <person name="Kurita K."/>
            <person name="Lapidus A."/>
            <person name="Lardinois S."/>
            <person name="Lauber J."/>
            <person name="Lazarevic V."/>
            <person name="Lee S.-M."/>
            <person name="Levine A."/>
            <person name="Liu H."/>
            <person name="Masuda S."/>
            <person name="Mauel C."/>
            <person name="Medigue C."/>
            <person name="Medina N."/>
            <person name="Mellado R.P."/>
            <person name="Mizuno M."/>
            <person name="Moestl D."/>
            <person name="Nakai S."/>
            <person name="Noback M."/>
            <person name="Noone D."/>
            <person name="O'Reilly M."/>
            <person name="Ogawa K."/>
            <person name="Ogiwara A."/>
            <person name="Oudega B."/>
            <person name="Park S.-H."/>
            <person name="Parro V."/>
            <person name="Pohl T.M."/>
            <person name="Portetelle D."/>
            <person name="Porwollik S."/>
            <person name="Prescott A.M."/>
            <person name="Presecan E."/>
            <person name="Pujic P."/>
            <person name="Purnelle B."/>
            <person name="Rapoport G."/>
            <person name="Rey M."/>
            <person name="Reynolds S."/>
            <person name="Rieger M."/>
            <person name="Rivolta C."/>
            <person name="Rocha E."/>
            <person name="Roche B."/>
            <person name="Rose M."/>
            <person name="Sadaie Y."/>
            <person name="Sato T."/>
            <person name="Scanlan E."/>
            <person name="Schleich S."/>
            <person name="Schroeter R."/>
            <person name="Scoffone F."/>
            <person name="Sekiguchi J."/>
            <person name="Sekowska A."/>
            <person name="Seror S.J."/>
            <person name="Serror P."/>
            <person name="Shin B.-S."/>
            <person name="Soldo B."/>
            <person name="Sorokin A."/>
            <person name="Tacconi E."/>
            <person name="Takagi T."/>
            <person name="Takahashi H."/>
            <person name="Takemaru K."/>
            <person name="Takeuchi M."/>
            <person name="Tamakoshi A."/>
            <person name="Tanaka T."/>
            <person name="Terpstra P."/>
            <person name="Tognoni A."/>
            <person name="Tosato V."/>
            <person name="Uchiyama S."/>
            <person name="Vandenbol M."/>
            <person name="Vannier F."/>
            <person name="Vassarotti A."/>
            <person name="Viari A."/>
            <person name="Wambutt R."/>
            <person name="Wedler E."/>
            <person name="Wedler H."/>
            <person name="Weitzenegger T."/>
            <person name="Winters P."/>
            <person name="Wipat A."/>
            <person name="Yamamoto H."/>
            <person name="Yamane K."/>
            <person name="Yasumoto K."/>
            <person name="Yata K."/>
            <person name="Yoshida K."/>
            <person name="Yoshikawa H.-F."/>
            <person name="Zumstein E."/>
            <person name="Yoshikawa H."/>
            <person name="Danchin A."/>
        </authorList>
    </citation>
    <scope>NUCLEOTIDE SEQUENCE [LARGE SCALE GENOMIC DNA]</scope>
    <source>
        <strain>168</strain>
    </source>
</reference>
<reference key="3">
    <citation type="journal article" date="2007" name="Nucleic Acids Res.">
        <title>YtqI from Bacillus subtilis has both oligoribonuclease and pAp-phosphatase activity.</title>
        <authorList>
            <person name="Mechold U."/>
            <person name="Fang G."/>
            <person name="Ngo S."/>
            <person name="Ogryzko V."/>
            <person name="Danchin A."/>
        </authorList>
    </citation>
    <scope>FUNCTION</scope>
    <scope>CATALYTIC ACTIVITY</scope>
    <scope>COFACTOR</scope>
    <source>
        <strain>168</strain>
    </source>
</reference>
<reference key="4">
    <citation type="journal article" date="2011" name="J. Biol. Chem.">
        <title>Role of RecJ-like protein with 5'-3' exonuclease activity in oligo(deoxy)nucleotide degradation.</title>
        <authorList>
            <person name="Wakamatsu T."/>
            <person name="Kim K."/>
            <person name="Uemura Y."/>
            <person name="Nakagawa N."/>
            <person name="Kuramitsu S."/>
            <person name="Masui R."/>
        </authorList>
    </citation>
    <scope>FUNCTION AS AN EXONUCLEASE</scope>
    <scope>BIOPHYSICOCHEMICAL PROPERTIES</scope>
    <scope>COFACTOR</scope>
    <scope>SUBUNIT</scope>
    <source>
        <strain>168</strain>
    </source>
</reference>
<reference key="5">
    <citation type="journal article" date="2012" name="RNA">
        <title>Characterization of NrnA homologs from Mycobacterium tuberculosis and Mycoplasma pneumoniae.</title>
        <authorList>
            <person name="Postic G."/>
            <person name="Danchin A."/>
            <person name="Mechold U."/>
        </authorList>
    </citation>
    <scope>FUNCTION AS A DNA OLIGONUCLEASE</scope>
    <source>
        <strain>168</strain>
    </source>
</reference>
<reference key="6">
    <citation type="journal article" date="2011" name="Acta Crystallogr. F">
        <title>Purification and crystallization of Bacillus subtilis NrnA, a novel enzyme involved in nanoRNA degradation.</title>
        <authorList>
            <person name="Nelersa C.M."/>
            <person name="Schmier B.J."/>
            <person name="Malhotra A."/>
        </authorList>
    </citation>
    <scope>PRELIMINARY CRYSTALLIZATION</scope>
</reference>
<dbReference type="EC" id="3.1.-.-"/>
<dbReference type="EC" id="3.1.3.7"/>
<dbReference type="EMBL" id="AF008220">
    <property type="protein sequence ID" value="AAC00337.1"/>
    <property type="molecule type" value="Genomic_DNA"/>
</dbReference>
<dbReference type="EMBL" id="AL009126">
    <property type="protein sequence ID" value="CAB14885.1"/>
    <property type="molecule type" value="Genomic_DNA"/>
</dbReference>
<dbReference type="PIR" id="F69999">
    <property type="entry name" value="F69999"/>
</dbReference>
<dbReference type="RefSeq" id="NP_390803.1">
    <property type="nucleotide sequence ID" value="NC_000964.3"/>
</dbReference>
<dbReference type="RefSeq" id="WP_004398971.1">
    <property type="nucleotide sequence ID" value="NZ_OZ025638.1"/>
</dbReference>
<dbReference type="PDB" id="5IPP">
    <property type="method" value="X-ray"/>
    <property type="resolution" value="1.95 A"/>
    <property type="chains" value="A/B/C/D=1-313"/>
</dbReference>
<dbReference type="PDB" id="5IUF">
    <property type="method" value="X-ray"/>
    <property type="resolution" value="1.95 A"/>
    <property type="chains" value="A/B/C/D=1-313"/>
</dbReference>
<dbReference type="PDB" id="5IZO">
    <property type="method" value="X-ray"/>
    <property type="resolution" value="1.95 A"/>
    <property type="chains" value="A/B/C/D=1-313"/>
</dbReference>
<dbReference type="PDB" id="5J21">
    <property type="method" value="X-ray"/>
    <property type="resolution" value="2.00 A"/>
    <property type="chains" value="A/B/C/D=1-313"/>
</dbReference>
<dbReference type="PDBsum" id="5IPP"/>
<dbReference type="PDBsum" id="5IUF"/>
<dbReference type="PDBsum" id="5IZO"/>
<dbReference type="PDBsum" id="5J21"/>
<dbReference type="SMR" id="O34600"/>
<dbReference type="FunCoup" id="O34600">
    <property type="interactions" value="134"/>
</dbReference>
<dbReference type="IntAct" id="O34600">
    <property type="interactions" value="1"/>
</dbReference>
<dbReference type="STRING" id="224308.BSU29250"/>
<dbReference type="jPOST" id="O34600"/>
<dbReference type="PaxDb" id="224308-BSU29250"/>
<dbReference type="EnsemblBacteria" id="CAB14885">
    <property type="protein sequence ID" value="CAB14885"/>
    <property type="gene ID" value="BSU_29250"/>
</dbReference>
<dbReference type="GeneID" id="935963"/>
<dbReference type="KEGG" id="bsu:BSU29250"/>
<dbReference type="PATRIC" id="fig|224308.179.peg.3178"/>
<dbReference type="eggNOG" id="COG0618">
    <property type="taxonomic scope" value="Bacteria"/>
</dbReference>
<dbReference type="InParanoid" id="O34600"/>
<dbReference type="OrthoDB" id="9803668at2"/>
<dbReference type="PhylomeDB" id="O34600"/>
<dbReference type="BioCyc" id="BSUB:BSU29250-MONOMER"/>
<dbReference type="SABIO-RK" id="O34600"/>
<dbReference type="Proteomes" id="UP000001570">
    <property type="component" value="Chromosome"/>
</dbReference>
<dbReference type="GO" id="GO:0008441">
    <property type="term" value="F:3'(2'),5'-bisphosphate nucleotidase activity"/>
    <property type="evidence" value="ECO:0007669"/>
    <property type="project" value="UniProtKB-EC"/>
</dbReference>
<dbReference type="GO" id="GO:0004527">
    <property type="term" value="F:exonuclease activity"/>
    <property type="evidence" value="ECO:0007669"/>
    <property type="project" value="UniProtKB-KW"/>
</dbReference>
<dbReference type="GO" id="GO:0003676">
    <property type="term" value="F:nucleic acid binding"/>
    <property type="evidence" value="ECO:0007669"/>
    <property type="project" value="InterPro"/>
</dbReference>
<dbReference type="Gene3D" id="3.10.310.30">
    <property type="match status" value="1"/>
</dbReference>
<dbReference type="Gene3D" id="3.90.1640.10">
    <property type="entry name" value="inorganic pyrophosphatase (n-terminal core)"/>
    <property type="match status" value="1"/>
</dbReference>
<dbReference type="InterPro" id="IPR001667">
    <property type="entry name" value="DDH_dom"/>
</dbReference>
<dbReference type="InterPro" id="IPR038763">
    <property type="entry name" value="DHH_sf"/>
</dbReference>
<dbReference type="InterPro" id="IPR003156">
    <property type="entry name" value="DHHA1_dom"/>
</dbReference>
<dbReference type="InterPro" id="IPR051319">
    <property type="entry name" value="Oligoribo/pAp-PDE_c-di-AMP_PDE"/>
</dbReference>
<dbReference type="PANTHER" id="PTHR47618">
    <property type="entry name" value="BIFUNCTIONAL OLIGORIBONUCLEASE AND PAP PHOSPHATASE NRNA"/>
    <property type="match status" value="1"/>
</dbReference>
<dbReference type="PANTHER" id="PTHR47618:SF1">
    <property type="entry name" value="BIFUNCTIONAL OLIGORIBONUCLEASE AND PAP PHOSPHATASE NRNA"/>
    <property type="match status" value="1"/>
</dbReference>
<dbReference type="Pfam" id="PF01368">
    <property type="entry name" value="DHH"/>
    <property type="match status" value="1"/>
</dbReference>
<dbReference type="Pfam" id="PF02272">
    <property type="entry name" value="DHHA1"/>
    <property type="match status" value="1"/>
</dbReference>
<dbReference type="SUPFAM" id="SSF64182">
    <property type="entry name" value="DHH phosphoesterases"/>
    <property type="match status" value="1"/>
</dbReference>
<proteinExistence type="evidence at protein level"/>
<comment type="function">
    <text evidence="1 2 3">Bifunctional enzyme which has both oligoribonuclease and pAp-phosphatase activities. Degrades RNA and DNA oligonucleotides with a length of 5 nucleotides and shorter, with a preference for 3-mers. Directionality is controversial; shown to degrade 5-mers and less in a 3' to 5' direction (PubMed:17586819), and 11-mers in a 5' to 3' direction (PubMed:21087930). Converts 3'(2')-phosphoadenosine 5'-phosphate (PAP) to AMP.</text>
</comment>
<comment type="catalytic activity">
    <reaction evidence="1">
        <text>adenosine 3',5'-bisphosphate + H2O = AMP + phosphate</text>
        <dbReference type="Rhea" id="RHEA:10040"/>
        <dbReference type="ChEBI" id="CHEBI:15377"/>
        <dbReference type="ChEBI" id="CHEBI:43474"/>
        <dbReference type="ChEBI" id="CHEBI:58343"/>
        <dbReference type="ChEBI" id="CHEBI:456215"/>
        <dbReference type="EC" id="3.1.3.7"/>
    </reaction>
</comment>
<comment type="cofactor">
    <cofactor evidence="1 2">
        <name>Mn(2+)</name>
        <dbReference type="ChEBI" id="CHEBI:29035"/>
    </cofactor>
</comment>
<comment type="subunit">
    <text evidence="5">Tetramer.</text>
</comment>
<comment type="miscellaneous">
    <text>In accordance with its dual activities, is able to complement both orn and cysQ mutants in E.coli.</text>
</comment>
<comment type="similarity">
    <text evidence="4">Belongs to the NrnA oligoribonuclease family.</text>
</comment>
<protein>
    <recommendedName>
        <fullName>Bifunctional oligoribonuclease and PAP phosphatase NrnA</fullName>
        <ecNumber>3.1.-.-</ecNumber>
    </recommendedName>
    <alternativeName>
        <fullName>3'(2'),5'-bisphosphate nucleotidase</fullName>
        <ecNumber>3.1.3.7</ecNumber>
    </alternativeName>
    <alternativeName>
        <fullName>3'-phosphoadenosine 5'-phosphate phosphatase</fullName>
        <shortName>PAP phosphatase</shortName>
    </alternativeName>
    <alternativeName>
        <fullName>nanoRNase</fullName>
    </alternativeName>
</protein>
<evidence type="ECO:0000269" key="1">
    <source>
    </source>
</evidence>
<evidence type="ECO:0000269" key="2">
    <source>
    </source>
</evidence>
<evidence type="ECO:0000269" key="3">
    <source>
    </source>
</evidence>
<evidence type="ECO:0000305" key="4"/>
<evidence type="ECO:0000305" key="5">
    <source>
    </source>
</evidence>
<evidence type="ECO:0007829" key="6">
    <source>
        <dbReference type="PDB" id="5IPP"/>
    </source>
</evidence>
<accession>O34600</accession>
<accession>Q795V2</accession>